<gene>
    <name evidence="1" type="primary">zntB</name>
    <name type="ordered locus">ECH74115_1990</name>
</gene>
<protein>
    <recommendedName>
        <fullName evidence="1">Zinc transport protein ZntB</fullName>
    </recommendedName>
</protein>
<sequence length="327" mass="36612">MEAIKGSDVNVPDAVFAWMLDGRGGVKPLENTDVIDEAHPCWLHLNYVHHDSAQWLATTPLLPNNVRDALAGESTRPRVSRLGEGTLITLRCINGSTDERPDQLVAMRVYMDGRLIVSTRQRKVLALDDVVSDLEEGTGPTDCGGWLVDVCDALTDHSSEFIEQLHDKIIDLEDNLLDQQIPPRGFLALLRKQLIVMRRYMAPQRDVYARLASERLPWMSDDQRRRMQDIADRLGRGLDEIDACIARTGVMADEIAQVMQENLARRTYTMSLMAMVFLPSTFLTGLFGVNLGGIPGGGWQFGFSIFCILLVVLIGGVALWLHRSKWL</sequence>
<dbReference type="EMBL" id="CP001164">
    <property type="protein sequence ID" value="ACI38524.1"/>
    <property type="molecule type" value="Genomic_DNA"/>
</dbReference>
<dbReference type="RefSeq" id="WP_000387388.1">
    <property type="nucleotide sequence ID" value="NC_011353.1"/>
</dbReference>
<dbReference type="SMR" id="B5Z0R2"/>
<dbReference type="GeneID" id="93775479"/>
<dbReference type="KEGG" id="ecf:ECH74115_1990"/>
<dbReference type="HOGENOM" id="CLU_007127_2_0_6"/>
<dbReference type="GO" id="GO:0005886">
    <property type="term" value="C:plasma membrane"/>
    <property type="evidence" value="ECO:0007669"/>
    <property type="project" value="UniProtKB-SubCell"/>
</dbReference>
<dbReference type="GO" id="GO:0050897">
    <property type="term" value="F:cobalt ion binding"/>
    <property type="evidence" value="ECO:0007669"/>
    <property type="project" value="TreeGrafter"/>
</dbReference>
<dbReference type="GO" id="GO:0015087">
    <property type="term" value="F:cobalt ion transmembrane transporter activity"/>
    <property type="evidence" value="ECO:0007669"/>
    <property type="project" value="TreeGrafter"/>
</dbReference>
<dbReference type="GO" id="GO:0000287">
    <property type="term" value="F:magnesium ion binding"/>
    <property type="evidence" value="ECO:0007669"/>
    <property type="project" value="TreeGrafter"/>
</dbReference>
<dbReference type="GO" id="GO:0015095">
    <property type="term" value="F:magnesium ion transmembrane transporter activity"/>
    <property type="evidence" value="ECO:0007669"/>
    <property type="project" value="TreeGrafter"/>
</dbReference>
<dbReference type="GO" id="GO:0005385">
    <property type="term" value="F:zinc ion transmembrane transporter activity"/>
    <property type="evidence" value="ECO:0007669"/>
    <property type="project" value="UniProtKB-UniRule"/>
</dbReference>
<dbReference type="CDD" id="cd12833">
    <property type="entry name" value="ZntB-like_1"/>
    <property type="match status" value="1"/>
</dbReference>
<dbReference type="FunFam" id="1.20.58.340:FF:000002">
    <property type="entry name" value="Zinc transport protein ZntB"/>
    <property type="match status" value="1"/>
</dbReference>
<dbReference type="FunFam" id="1.20.58.340:FF:000003">
    <property type="entry name" value="Zinc transport protein ZntB"/>
    <property type="match status" value="1"/>
</dbReference>
<dbReference type="FunFam" id="3.30.460.20:FF:000001">
    <property type="entry name" value="Zinc transport protein ZntB"/>
    <property type="match status" value="1"/>
</dbReference>
<dbReference type="Gene3D" id="3.30.460.20">
    <property type="entry name" value="CorA soluble domain-like"/>
    <property type="match status" value="1"/>
</dbReference>
<dbReference type="Gene3D" id="1.20.58.340">
    <property type="entry name" value="Magnesium transport protein CorA, transmembrane region"/>
    <property type="match status" value="2"/>
</dbReference>
<dbReference type="HAMAP" id="MF_01565">
    <property type="entry name" value="ZntB"/>
    <property type="match status" value="1"/>
</dbReference>
<dbReference type="InterPro" id="IPR045861">
    <property type="entry name" value="CorA_cytoplasmic_dom"/>
</dbReference>
<dbReference type="InterPro" id="IPR045863">
    <property type="entry name" value="CorA_TM1_TM2"/>
</dbReference>
<dbReference type="InterPro" id="IPR002523">
    <property type="entry name" value="MgTranspt_CorA/ZnTranspt_ZntB"/>
</dbReference>
<dbReference type="InterPro" id="IPR023714">
    <property type="entry name" value="Zn_transp_ZntB"/>
</dbReference>
<dbReference type="NCBIfam" id="NF007092">
    <property type="entry name" value="PRK09546.1"/>
    <property type="match status" value="1"/>
</dbReference>
<dbReference type="PANTHER" id="PTHR46494">
    <property type="entry name" value="CORA FAMILY METAL ION TRANSPORTER (EUROFUNG)"/>
    <property type="match status" value="1"/>
</dbReference>
<dbReference type="PANTHER" id="PTHR46494:SF3">
    <property type="entry name" value="ZINC TRANSPORT PROTEIN ZNTB"/>
    <property type="match status" value="1"/>
</dbReference>
<dbReference type="Pfam" id="PF01544">
    <property type="entry name" value="CorA"/>
    <property type="match status" value="1"/>
</dbReference>
<dbReference type="SUPFAM" id="SSF143865">
    <property type="entry name" value="CorA soluble domain-like"/>
    <property type="match status" value="1"/>
</dbReference>
<dbReference type="SUPFAM" id="SSF144083">
    <property type="entry name" value="Magnesium transport protein CorA, transmembrane region"/>
    <property type="match status" value="1"/>
</dbReference>
<proteinExistence type="inferred from homology"/>
<accession>B5Z0R2</accession>
<keyword id="KW-0997">Cell inner membrane</keyword>
<keyword id="KW-1003">Cell membrane</keyword>
<keyword id="KW-0406">Ion transport</keyword>
<keyword id="KW-0472">Membrane</keyword>
<keyword id="KW-0812">Transmembrane</keyword>
<keyword id="KW-1133">Transmembrane helix</keyword>
<keyword id="KW-0813">Transport</keyword>
<keyword id="KW-0862">Zinc</keyword>
<evidence type="ECO:0000255" key="1">
    <source>
        <dbReference type="HAMAP-Rule" id="MF_01565"/>
    </source>
</evidence>
<organism>
    <name type="scientific">Escherichia coli O157:H7 (strain EC4115 / EHEC)</name>
    <dbReference type="NCBI Taxonomy" id="444450"/>
    <lineage>
        <taxon>Bacteria</taxon>
        <taxon>Pseudomonadati</taxon>
        <taxon>Pseudomonadota</taxon>
        <taxon>Gammaproteobacteria</taxon>
        <taxon>Enterobacterales</taxon>
        <taxon>Enterobacteriaceae</taxon>
        <taxon>Escherichia</taxon>
    </lineage>
</organism>
<reference key="1">
    <citation type="journal article" date="2011" name="Proc. Natl. Acad. Sci. U.S.A.">
        <title>Genomic anatomy of Escherichia coli O157:H7 outbreaks.</title>
        <authorList>
            <person name="Eppinger M."/>
            <person name="Mammel M.K."/>
            <person name="Leclerc J.E."/>
            <person name="Ravel J."/>
            <person name="Cebula T.A."/>
        </authorList>
    </citation>
    <scope>NUCLEOTIDE SEQUENCE [LARGE SCALE GENOMIC DNA]</scope>
    <source>
        <strain>EC4115 / EHEC</strain>
    </source>
</reference>
<comment type="function">
    <text evidence="1">Zinc transporter. Acts as a Zn(2+):proton symporter, which likely mediates zinc ion uptake.</text>
</comment>
<comment type="catalytic activity">
    <reaction evidence="1">
        <text>Zn(2+)(out) + H(+)(out) = Zn(2+)(in) + H(+)(in)</text>
        <dbReference type="Rhea" id="RHEA:71195"/>
        <dbReference type="ChEBI" id="CHEBI:15378"/>
        <dbReference type="ChEBI" id="CHEBI:29105"/>
    </reaction>
    <physiologicalReaction direction="left-to-right" evidence="1">
        <dbReference type="Rhea" id="RHEA:71196"/>
    </physiologicalReaction>
</comment>
<comment type="subcellular location">
    <subcellularLocation>
        <location evidence="1">Cell inner membrane</location>
        <topology evidence="1">Multi-pass membrane protein</topology>
    </subcellularLocation>
</comment>
<comment type="similarity">
    <text evidence="1">Belongs to the CorA metal ion transporter (MIT) (TC 1.A.35) family.</text>
</comment>
<feature type="chain" id="PRO_1000189717" description="Zinc transport protein ZntB">
    <location>
        <begin position="1"/>
        <end position="327"/>
    </location>
</feature>
<feature type="topological domain" description="Cytoplasmic" evidence="1">
    <location>
        <begin position="1"/>
        <end position="273"/>
    </location>
</feature>
<feature type="transmembrane region" description="Helical" evidence="1">
    <location>
        <begin position="274"/>
        <end position="294"/>
    </location>
</feature>
<feature type="topological domain" description="Periplasmic" evidence="1">
    <location>
        <begin position="295"/>
        <end position="300"/>
    </location>
</feature>
<feature type="transmembrane region" description="Helical" evidence="1">
    <location>
        <begin position="301"/>
        <end position="321"/>
    </location>
</feature>
<feature type="topological domain" description="Cytoplasmic" evidence="1">
    <location>
        <begin position="322"/>
        <end position="327"/>
    </location>
</feature>
<name>ZNTB_ECO5E</name>